<accession>A1BIP2</accession>
<name>AROA_CHLPD</name>
<sequence>MSVFKGEVTALPPDKSISHRAALIGALSDGTTEIVNFSGGFDNQSTLAVLQASGIALIQEECAGSYGRRIRRVVIESRGLWSFLAPQAPLMCNNSGSTMRMFAGILAAQPFESVLEGDSSLMKRPMNRVADPLRQMGAQVELSFSGTAPIRIQGTKDLHSLEYRLPVSSAQVKSLVAFAALHADGQTRIIEPIRSRDHTELMLGLETIDQPNGERVIIVPGRKRIESKPFYIPADPSAACFIVALALLAKGSDIIIRDLCLNPTRTGYLAILAGAGAGISVENSRVIGGEAIGDVLVHSEGELNSLVISDPHEVANVIDEIPMLAVLSAFSSGRFELHHAAELRTKESDRIDALVVNLERLGFQCEQYPDGFKVNGRIAMPKGVVSIESFDDHRIAMSFAIAGKATGVDLAISDIGVVGVSFPNFFEIIESLEV</sequence>
<gene>
    <name evidence="1" type="primary">aroA</name>
    <name type="ordered locus">Cpha266_2277</name>
</gene>
<feature type="chain" id="PRO_1000099681" description="3-phosphoshikimate 1-carboxyvinyltransferase">
    <location>
        <begin position="1"/>
        <end position="434"/>
    </location>
</feature>
<feature type="active site" description="Proton acceptor" evidence="1">
    <location>
        <position position="319"/>
    </location>
</feature>
<feature type="binding site" evidence="1">
    <location>
        <position position="15"/>
    </location>
    <ligand>
        <name>3-phosphoshikimate</name>
        <dbReference type="ChEBI" id="CHEBI:145989"/>
    </ligand>
</feature>
<feature type="binding site" evidence="1">
    <location>
        <position position="15"/>
    </location>
    <ligand>
        <name>phosphoenolpyruvate</name>
        <dbReference type="ChEBI" id="CHEBI:58702"/>
    </ligand>
</feature>
<feature type="binding site" evidence="1">
    <location>
        <position position="16"/>
    </location>
    <ligand>
        <name>3-phosphoshikimate</name>
        <dbReference type="ChEBI" id="CHEBI:145989"/>
    </ligand>
</feature>
<feature type="binding site" evidence="1">
    <location>
        <position position="20"/>
    </location>
    <ligand>
        <name>3-phosphoshikimate</name>
        <dbReference type="ChEBI" id="CHEBI:145989"/>
    </ligand>
</feature>
<feature type="binding site" evidence="1">
    <location>
        <position position="96"/>
    </location>
    <ligand>
        <name>phosphoenolpyruvate</name>
        <dbReference type="ChEBI" id="CHEBI:58702"/>
    </ligand>
</feature>
<feature type="binding site" evidence="1">
    <location>
        <position position="124"/>
    </location>
    <ligand>
        <name>phosphoenolpyruvate</name>
        <dbReference type="ChEBI" id="CHEBI:58702"/>
    </ligand>
</feature>
<feature type="binding site" evidence="1">
    <location>
        <position position="169"/>
    </location>
    <ligand>
        <name>3-phosphoshikimate</name>
        <dbReference type="ChEBI" id="CHEBI:145989"/>
    </ligand>
</feature>
<feature type="binding site" evidence="1">
    <location>
        <position position="171"/>
    </location>
    <ligand>
        <name>3-phosphoshikimate</name>
        <dbReference type="ChEBI" id="CHEBI:145989"/>
    </ligand>
</feature>
<feature type="binding site" evidence="1">
    <location>
        <position position="171"/>
    </location>
    <ligand>
        <name>phosphoenolpyruvate</name>
        <dbReference type="ChEBI" id="CHEBI:58702"/>
    </ligand>
</feature>
<feature type="binding site" evidence="1">
    <location>
        <position position="195"/>
    </location>
    <ligand>
        <name>3-phosphoshikimate</name>
        <dbReference type="ChEBI" id="CHEBI:145989"/>
    </ligand>
</feature>
<feature type="binding site" evidence="1">
    <location>
        <position position="319"/>
    </location>
    <ligand>
        <name>3-phosphoshikimate</name>
        <dbReference type="ChEBI" id="CHEBI:145989"/>
    </ligand>
</feature>
<feature type="binding site" evidence="1">
    <location>
        <position position="346"/>
    </location>
    <ligand>
        <name>3-phosphoshikimate</name>
        <dbReference type="ChEBI" id="CHEBI:145989"/>
    </ligand>
</feature>
<feature type="binding site" evidence="1">
    <location>
        <position position="350"/>
    </location>
    <ligand>
        <name>phosphoenolpyruvate</name>
        <dbReference type="ChEBI" id="CHEBI:58702"/>
    </ligand>
</feature>
<feature type="binding site" evidence="1">
    <location>
        <position position="394"/>
    </location>
    <ligand>
        <name>phosphoenolpyruvate</name>
        <dbReference type="ChEBI" id="CHEBI:58702"/>
    </ligand>
</feature>
<dbReference type="EC" id="2.5.1.19" evidence="1"/>
<dbReference type="EMBL" id="CP000492">
    <property type="protein sequence ID" value="ABL66269.1"/>
    <property type="molecule type" value="Genomic_DNA"/>
</dbReference>
<dbReference type="RefSeq" id="WP_011746060.1">
    <property type="nucleotide sequence ID" value="NC_008639.1"/>
</dbReference>
<dbReference type="SMR" id="A1BIP2"/>
<dbReference type="STRING" id="290317.Cpha266_2277"/>
<dbReference type="KEGG" id="cph:Cpha266_2277"/>
<dbReference type="eggNOG" id="COG0128">
    <property type="taxonomic scope" value="Bacteria"/>
</dbReference>
<dbReference type="HOGENOM" id="CLU_024321_0_1_10"/>
<dbReference type="OrthoDB" id="9809920at2"/>
<dbReference type="UniPathway" id="UPA00053">
    <property type="reaction ID" value="UER00089"/>
</dbReference>
<dbReference type="Proteomes" id="UP000008701">
    <property type="component" value="Chromosome"/>
</dbReference>
<dbReference type="GO" id="GO:0005737">
    <property type="term" value="C:cytoplasm"/>
    <property type="evidence" value="ECO:0007669"/>
    <property type="project" value="UniProtKB-SubCell"/>
</dbReference>
<dbReference type="GO" id="GO:0003866">
    <property type="term" value="F:3-phosphoshikimate 1-carboxyvinyltransferase activity"/>
    <property type="evidence" value="ECO:0007669"/>
    <property type="project" value="UniProtKB-UniRule"/>
</dbReference>
<dbReference type="GO" id="GO:0008652">
    <property type="term" value="P:amino acid biosynthetic process"/>
    <property type="evidence" value="ECO:0007669"/>
    <property type="project" value="UniProtKB-KW"/>
</dbReference>
<dbReference type="GO" id="GO:0009073">
    <property type="term" value="P:aromatic amino acid family biosynthetic process"/>
    <property type="evidence" value="ECO:0007669"/>
    <property type="project" value="UniProtKB-KW"/>
</dbReference>
<dbReference type="GO" id="GO:0009423">
    <property type="term" value="P:chorismate biosynthetic process"/>
    <property type="evidence" value="ECO:0007669"/>
    <property type="project" value="UniProtKB-UniRule"/>
</dbReference>
<dbReference type="CDD" id="cd01556">
    <property type="entry name" value="EPSP_synthase"/>
    <property type="match status" value="1"/>
</dbReference>
<dbReference type="FunFam" id="3.65.10.10:FF:000005">
    <property type="entry name" value="3-phosphoshikimate 1-carboxyvinyltransferase"/>
    <property type="match status" value="1"/>
</dbReference>
<dbReference type="Gene3D" id="3.65.10.10">
    <property type="entry name" value="Enolpyruvate transferase domain"/>
    <property type="match status" value="2"/>
</dbReference>
<dbReference type="HAMAP" id="MF_00210">
    <property type="entry name" value="EPSP_synth"/>
    <property type="match status" value="1"/>
</dbReference>
<dbReference type="InterPro" id="IPR001986">
    <property type="entry name" value="Enolpyruvate_Tfrase_dom"/>
</dbReference>
<dbReference type="InterPro" id="IPR036968">
    <property type="entry name" value="Enolpyruvate_Tfrase_sf"/>
</dbReference>
<dbReference type="InterPro" id="IPR006264">
    <property type="entry name" value="EPSP_synthase"/>
</dbReference>
<dbReference type="InterPro" id="IPR023193">
    <property type="entry name" value="EPSP_synthase_CS"/>
</dbReference>
<dbReference type="InterPro" id="IPR013792">
    <property type="entry name" value="RNA3'P_cycl/enolpyr_Trfase_a/b"/>
</dbReference>
<dbReference type="NCBIfam" id="TIGR01356">
    <property type="entry name" value="aroA"/>
    <property type="match status" value="1"/>
</dbReference>
<dbReference type="PANTHER" id="PTHR21090">
    <property type="entry name" value="AROM/DEHYDROQUINATE SYNTHASE"/>
    <property type="match status" value="1"/>
</dbReference>
<dbReference type="PANTHER" id="PTHR21090:SF5">
    <property type="entry name" value="PENTAFUNCTIONAL AROM POLYPEPTIDE"/>
    <property type="match status" value="1"/>
</dbReference>
<dbReference type="Pfam" id="PF00275">
    <property type="entry name" value="EPSP_synthase"/>
    <property type="match status" value="1"/>
</dbReference>
<dbReference type="PIRSF" id="PIRSF000505">
    <property type="entry name" value="EPSPS"/>
    <property type="match status" value="1"/>
</dbReference>
<dbReference type="SUPFAM" id="SSF55205">
    <property type="entry name" value="EPT/RTPC-like"/>
    <property type="match status" value="1"/>
</dbReference>
<dbReference type="PROSITE" id="PS00885">
    <property type="entry name" value="EPSP_SYNTHASE_2"/>
    <property type="match status" value="1"/>
</dbReference>
<evidence type="ECO:0000255" key="1">
    <source>
        <dbReference type="HAMAP-Rule" id="MF_00210"/>
    </source>
</evidence>
<organism>
    <name type="scientific">Chlorobium phaeobacteroides (strain DSM 266 / SMG 266 / 2430)</name>
    <dbReference type="NCBI Taxonomy" id="290317"/>
    <lineage>
        <taxon>Bacteria</taxon>
        <taxon>Pseudomonadati</taxon>
        <taxon>Chlorobiota</taxon>
        <taxon>Chlorobiia</taxon>
        <taxon>Chlorobiales</taxon>
        <taxon>Chlorobiaceae</taxon>
        <taxon>Chlorobium/Pelodictyon group</taxon>
        <taxon>Chlorobium</taxon>
    </lineage>
</organism>
<keyword id="KW-0028">Amino-acid biosynthesis</keyword>
<keyword id="KW-0057">Aromatic amino acid biosynthesis</keyword>
<keyword id="KW-0963">Cytoplasm</keyword>
<keyword id="KW-1185">Reference proteome</keyword>
<keyword id="KW-0808">Transferase</keyword>
<protein>
    <recommendedName>
        <fullName evidence="1">3-phosphoshikimate 1-carboxyvinyltransferase</fullName>
        <ecNumber evidence="1">2.5.1.19</ecNumber>
    </recommendedName>
    <alternativeName>
        <fullName evidence="1">5-enolpyruvylshikimate-3-phosphate synthase</fullName>
        <shortName evidence="1">EPSP synthase</shortName>
        <shortName evidence="1">EPSPS</shortName>
    </alternativeName>
</protein>
<proteinExistence type="inferred from homology"/>
<comment type="function">
    <text evidence="1">Catalyzes the transfer of the enolpyruvyl moiety of phosphoenolpyruvate (PEP) to the 5-hydroxyl of shikimate-3-phosphate (S3P) to produce enolpyruvyl shikimate-3-phosphate and inorganic phosphate.</text>
</comment>
<comment type="catalytic activity">
    <reaction evidence="1">
        <text>3-phosphoshikimate + phosphoenolpyruvate = 5-O-(1-carboxyvinyl)-3-phosphoshikimate + phosphate</text>
        <dbReference type="Rhea" id="RHEA:21256"/>
        <dbReference type="ChEBI" id="CHEBI:43474"/>
        <dbReference type="ChEBI" id="CHEBI:57701"/>
        <dbReference type="ChEBI" id="CHEBI:58702"/>
        <dbReference type="ChEBI" id="CHEBI:145989"/>
        <dbReference type="EC" id="2.5.1.19"/>
    </reaction>
    <physiologicalReaction direction="left-to-right" evidence="1">
        <dbReference type="Rhea" id="RHEA:21257"/>
    </physiologicalReaction>
</comment>
<comment type="pathway">
    <text evidence="1">Metabolic intermediate biosynthesis; chorismate biosynthesis; chorismate from D-erythrose 4-phosphate and phosphoenolpyruvate: step 6/7.</text>
</comment>
<comment type="subunit">
    <text evidence="1">Monomer.</text>
</comment>
<comment type="subcellular location">
    <subcellularLocation>
        <location evidence="1">Cytoplasm</location>
    </subcellularLocation>
</comment>
<comment type="similarity">
    <text evidence="1">Belongs to the EPSP synthase family.</text>
</comment>
<reference key="1">
    <citation type="submission" date="2006-12" db="EMBL/GenBank/DDBJ databases">
        <title>Complete sequence of Chlorobium phaeobacteroides DSM 266.</title>
        <authorList>
            <consortium name="US DOE Joint Genome Institute"/>
            <person name="Copeland A."/>
            <person name="Lucas S."/>
            <person name="Lapidus A."/>
            <person name="Barry K."/>
            <person name="Detter J.C."/>
            <person name="Glavina del Rio T."/>
            <person name="Hammon N."/>
            <person name="Israni S."/>
            <person name="Pitluck S."/>
            <person name="Goltsman E."/>
            <person name="Schmutz J."/>
            <person name="Larimer F."/>
            <person name="Land M."/>
            <person name="Hauser L."/>
            <person name="Mikhailova N."/>
            <person name="Li T."/>
            <person name="Overmann J."/>
            <person name="Bryant D.A."/>
            <person name="Richardson P."/>
        </authorList>
    </citation>
    <scope>NUCLEOTIDE SEQUENCE [LARGE SCALE GENOMIC DNA]</scope>
    <source>
        <strain>DSM 266 / SMG 266 / 2430</strain>
    </source>
</reference>